<evidence type="ECO:0000255" key="1">
    <source>
        <dbReference type="HAMAP-Rule" id="MF_01271"/>
    </source>
</evidence>
<reference key="1">
    <citation type="submission" date="2007-08" db="EMBL/GenBank/DDBJ databases">
        <authorList>
            <consortium name="The Citrobacter koseri Genome Sequencing Project"/>
            <person name="McClelland M."/>
            <person name="Sanderson E.K."/>
            <person name="Porwollik S."/>
            <person name="Spieth J."/>
            <person name="Clifton W.S."/>
            <person name="Latreille P."/>
            <person name="Courtney L."/>
            <person name="Wang C."/>
            <person name="Pepin K."/>
            <person name="Bhonagiri V."/>
            <person name="Nash W."/>
            <person name="Johnson M."/>
            <person name="Thiruvilangam P."/>
            <person name="Wilson R."/>
        </authorList>
    </citation>
    <scope>NUCLEOTIDE SEQUENCE [LARGE SCALE GENOMIC DNA]</scope>
    <source>
        <strain>ATCC BAA-895 / CDC 4225-83 / SGSC4696</strain>
    </source>
</reference>
<protein>
    <recommendedName>
        <fullName evidence="1">N-acetyl-D-glucosamine kinase</fullName>
        <ecNumber evidence="1">2.7.1.59</ecNumber>
    </recommendedName>
    <alternativeName>
        <fullName evidence="1">GlcNAc kinase</fullName>
    </alternativeName>
</protein>
<sequence length="303" mass="33210">MYYGFDIGGTKIALGVFDNERRLRWEKRVPTPREGYEAFLTAVCDLVAEADQRFDVKGSVGIGIPGMPETEDGTLYAANVPAASGKPLRADLSARLDRDVRLDNDANCFALSEAWDDEFTQYPLVMGLILGTGVGGGLVLNGKPITGCSYITGEFGHMRLPVDALTLMGFDFPLRRCGCGQLGCIENYLSGRGFAWLYQHYYHQPLQAPEIIALWEQGDERARAHVERYLDLLAVCLGNILTIVDPDLVVIGGGLSNFTAITTQLADRLPRHLLPVARVPRIERARHGDAGGMRGAAFLHLTD</sequence>
<accession>A8AHU6</accession>
<feature type="chain" id="PRO_1000067378" description="N-acetyl-D-glucosamine kinase">
    <location>
        <begin position="1"/>
        <end position="303"/>
    </location>
</feature>
<feature type="binding site" evidence="1">
    <location>
        <begin position="4"/>
        <end position="11"/>
    </location>
    <ligand>
        <name>ATP</name>
        <dbReference type="ChEBI" id="CHEBI:30616"/>
    </ligand>
</feature>
<feature type="binding site" evidence="1">
    <location>
        <begin position="133"/>
        <end position="140"/>
    </location>
    <ligand>
        <name>ATP</name>
        <dbReference type="ChEBI" id="CHEBI:30616"/>
    </ligand>
</feature>
<feature type="binding site" evidence="1">
    <location>
        <position position="157"/>
    </location>
    <ligand>
        <name>Zn(2+)</name>
        <dbReference type="ChEBI" id="CHEBI:29105"/>
    </ligand>
</feature>
<feature type="binding site" evidence="1">
    <location>
        <position position="177"/>
    </location>
    <ligand>
        <name>Zn(2+)</name>
        <dbReference type="ChEBI" id="CHEBI:29105"/>
    </ligand>
</feature>
<feature type="binding site" evidence="1">
    <location>
        <position position="179"/>
    </location>
    <ligand>
        <name>Zn(2+)</name>
        <dbReference type="ChEBI" id="CHEBI:29105"/>
    </ligand>
</feature>
<feature type="binding site" evidence="1">
    <location>
        <position position="184"/>
    </location>
    <ligand>
        <name>Zn(2+)</name>
        <dbReference type="ChEBI" id="CHEBI:29105"/>
    </ligand>
</feature>
<dbReference type="EC" id="2.7.1.59" evidence="1"/>
<dbReference type="EMBL" id="CP000822">
    <property type="protein sequence ID" value="ABV13059.1"/>
    <property type="molecule type" value="Genomic_DNA"/>
</dbReference>
<dbReference type="RefSeq" id="WP_012132796.1">
    <property type="nucleotide sequence ID" value="NC_009792.1"/>
</dbReference>
<dbReference type="SMR" id="A8AHU6"/>
<dbReference type="STRING" id="290338.CKO_01932"/>
<dbReference type="GeneID" id="45135914"/>
<dbReference type="KEGG" id="cko:CKO_01932"/>
<dbReference type="HOGENOM" id="CLU_036604_0_3_6"/>
<dbReference type="OrthoDB" id="9810372at2"/>
<dbReference type="UniPathway" id="UPA00544"/>
<dbReference type="Proteomes" id="UP000008148">
    <property type="component" value="Chromosome"/>
</dbReference>
<dbReference type="GO" id="GO:0005524">
    <property type="term" value="F:ATP binding"/>
    <property type="evidence" value="ECO:0007669"/>
    <property type="project" value="UniProtKB-UniRule"/>
</dbReference>
<dbReference type="GO" id="GO:0045127">
    <property type="term" value="F:N-acetylglucosamine kinase activity"/>
    <property type="evidence" value="ECO:0007669"/>
    <property type="project" value="UniProtKB-UniRule"/>
</dbReference>
<dbReference type="GO" id="GO:0008270">
    <property type="term" value="F:zinc ion binding"/>
    <property type="evidence" value="ECO:0007669"/>
    <property type="project" value="UniProtKB-UniRule"/>
</dbReference>
<dbReference type="GO" id="GO:0006044">
    <property type="term" value="P:N-acetylglucosamine metabolic process"/>
    <property type="evidence" value="ECO:0007669"/>
    <property type="project" value="UniProtKB-UniRule"/>
</dbReference>
<dbReference type="GO" id="GO:0009254">
    <property type="term" value="P:peptidoglycan turnover"/>
    <property type="evidence" value="ECO:0007669"/>
    <property type="project" value="UniProtKB-UniRule"/>
</dbReference>
<dbReference type="CDD" id="cd24057">
    <property type="entry name" value="ASKHA_NBD_ROK_NAGK"/>
    <property type="match status" value="1"/>
</dbReference>
<dbReference type="FunFam" id="3.30.420.40:FF:000049">
    <property type="entry name" value="N-acetyl-D-glucosamine kinase"/>
    <property type="match status" value="1"/>
</dbReference>
<dbReference type="FunFam" id="3.30.420.40:FF:000051">
    <property type="entry name" value="N-acetyl-D-glucosamine kinase"/>
    <property type="match status" value="1"/>
</dbReference>
<dbReference type="Gene3D" id="3.30.420.40">
    <property type="match status" value="2"/>
</dbReference>
<dbReference type="HAMAP" id="MF_01271">
    <property type="entry name" value="GlcNAc_kinase"/>
    <property type="match status" value="1"/>
</dbReference>
<dbReference type="InterPro" id="IPR043129">
    <property type="entry name" value="ATPase_NBD"/>
</dbReference>
<dbReference type="InterPro" id="IPR023505">
    <property type="entry name" value="N-acetyl-D-glucosamine_kinase"/>
</dbReference>
<dbReference type="InterPro" id="IPR000600">
    <property type="entry name" value="ROK"/>
</dbReference>
<dbReference type="InterPro" id="IPR049874">
    <property type="entry name" value="ROK_cs"/>
</dbReference>
<dbReference type="NCBIfam" id="NF009835">
    <property type="entry name" value="PRK13310.1"/>
    <property type="match status" value="1"/>
</dbReference>
<dbReference type="PANTHER" id="PTHR18964:SF162">
    <property type="entry name" value="N-ACETYL-D-GLUCOSAMINE KINASE"/>
    <property type="match status" value="1"/>
</dbReference>
<dbReference type="PANTHER" id="PTHR18964">
    <property type="entry name" value="ROK (REPRESSOR, ORF, KINASE) FAMILY"/>
    <property type="match status" value="1"/>
</dbReference>
<dbReference type="Pfam" id="PF00480">
    <property type="entry name" value="ROK"/>
    <property type="match status" value="1"/>
</dbReference>
<dbReference type="SUPFAM" id="SSF53067">
    <property type="entry name" value="Actin-like ATPase domain"/>
    <property type="match status" value="1"/>
</dbReference>
<dbReference type="PROSITE" id="PS01125">
    <property type="entry name" value="ROK"/>
    <property type="match status" value="1"/>
</dbReference>
<keyword id="KW-0067">ATP-binding</keyword>
<keyword id="KW-0119">Carbohydrate metabolism</keyword>
<keyword id="KW-0418">Kinase</keyword>
<keyword id="KW-0479">Metal-binding</keyword>
<keyword id="KW-0547">Nucleotide-binding</keyword>
<keyword id="KW-1185">Reference proteome</keyword>
<keyword id="KW-0808">Transferase</keyword>
<keyword id="KW-0862">Zinc</keyword>
<proteinExistence type="inferred from homology"/>
<organism>
    <name type="scientific">Citrobacter koseri (strain ATCC BAA-895 / CDC 4225-83 / SGSC4696)</name>
    <dbReference type="NCBI Taxonomy" id="290338"/>
    <lineage>
        <taxon>Bacteria</taxon>
        <taxon>Pseudomonadati</taxon>
        <taxon>Pseudomonadota</taxon>
        <taxon>Gammaproteobacteria</taxon>
        <taxon>Enterobacterales</taxon>
        <taxon>Enterobacteriaceae</taxon>
        <taxon>Citrobacter</taxon>
    </lineage>
</organism>
<gene>
    <name evidence="1" type="primary">nagK</name>
    <name type="ordered locus">CKO_01932</name>
</gene>
<name>NAGK_CITK8</name>
<comment type="function">
    <text evidence="1">Catalyzes the phosphorylation of N-acetyl-D-glucosamine (GlcNAc) derived from cell-wall degradation, yielding GlcNAc-6-P.</text>
</comment>
<comment type="catalytic activity">
    <reaction evidence="1">
        <text>N-acetyl-D-glucosamine + ATP = N-acetyl-D-glucosamine 6-phosphate + ADP + H(+)</text>
        <dbReference type="Rhea" id="RHEA:17417"/>
        <dbReference type="ChEBI" id="CHEBI:15378"/>
        <dbReference type="ChEBI" id="CHEBI:30616"/>
        <dbReference type="ChEBI" id="CHEBI:57513"/>
        <dbReference type="ChEBI" id="CHEBI:456216"/>
        <dbReference type="ChEBI" id="CHEBI:506227"/>
        <dbReference type="EC" id="2.7.1.59"/>
    </reaction>
</comment>
<comment type="pathway">
    <text evidence="1">Cell wall biogenesis; peptidoglycan recycling.</text>
</comment>
<comment type="similarity">
    <text evidence="1">Belongs to the ROK (NagC/XylR) family. NagK subfamily.</text>
</comment>